<proteinExistence type="evidence at protein level"/>
<feature type="signal peptide" evidence="1">
    <location>
        <begin position="1"/>
        <end position="16"/>
    </location>
</feature>
<feature type="chain" id="PRO_5000214050" description="Xyloglucan-specific endo-beta-1,4-glucanase A">
    <location>
        <begin position="17"/>
        <end position="241"/>
    </location>
</feature>
<feature type="glycosylation site" description="N-linked (GlcNAc...) asparagine" evidence="1">
    <location>
        <position position="47"/>
    </location>
</feature>
<keyword id="KW-0119">Carbohydrate metabolism</keyword>
<keyword id="KW-0961">Cell wall biogenesis/degradation</keyword>
<keyword id="KW-0325">Glycoprotein</keyword>
<keyword id="KW-0326">Glycosidase</keyword>
<keyword id="KW-0378">Hydrolase</keyword>
<keyword id="KW-0624">Polysaccharide degradation</keyword>
<keyword id="KW-0964">Secreted</keyword>
<keyword id="KW-0732">Signal</keyword>
<comment type="function">
    <text evidence="4">Catalyzes endohydrolysis of 1,4-beta-D-glucosidic linkages in xyloglucan with retention of the beta-configuration of the glycosyl residues. Specific for xyloglucan and does not hydrolyze other cell wall components (Probable).</text>
</comment>
<comment type="catalytic activity">
    <reaction>
        <text>xyloglucan + H2O = xyloglucan oligosaccharides.</text>
        <dbReference type="EC" id="3.2.1.151"/>
    </reaction>
</comment>
<comment type="biophysicochemical properties">
    <phDependence>
        <text evidence="2">Optimum pH is 5.0.</text>
    </phDependence>
    <temperatureDependence>
        <text evidence="2">Optimum temperature is between 50 and 60 degrees Celsius.</text>
    </temperatureDependence>
</comment>
<comment type="subcellular location">
    <subcellularLocation>
        <location evidence="3">Secreted</location>
    </subcellularLocation>
</comment>
<comment type="similarity">
    <text evidence="3">Belongs to the glycosyl hydrolase 12 (cellulase H) family.</text>
</comment>
<name>XGEA_ASPNG</name>
<gene>
    <name type="primary">xgeA</name>
    <name type="synonym">XEG12A</name>
</gene>
<reference key="1">
    <citation type="journal article" date="2008" name="Biochem. J.">
        <title>A xyloglucan-specific family 12 glycosyl hydrolase from Aspergillus niger: recombinant expression, purification and characterization.</title>
        <authorList>
            <person name="Master E.R."/>
            <person name="Zheng Y."/>
            <person name="Storms R."/>
            <person name="Tsang A."/>
            <person name="Powlowski J."/>
        </authorList>
    </citation>
    <scope>NUCLEOTIDE SEQUENCE [MRNA]</scope>
    <scope>IDENTIFICATION BY MASS SPECTROMETRY</scope>
    <scope>FUNCTION</scope>
    <scope>BIOPHYSICOCHEMICAL PROPERTIES</scope>
    <source>
        <strain>ATCC 9089 / N402</strain>
    </source>
</reference>
<sequence length="241" mass="25456">MKVLALSALLSLASAASISRRSDFCGQWDTATAGDFILYNDLWGEDNASSGSQCTGVDSASGSEIAWHTSWSWEGGSSDVKSYANAALQFTGTQLSSISSIPSTWKWTYSGSDIVADVAYDMFLGSTADASSDEYEIMVWLAALGGAGPISSTGSTIATPTINGVTWDLYTGPNGDTTVYSFVAQSTTEDFSGDLNDFFTYLVDNEGVSDSLYLTTLEAGTEPFTGSDAELKVSEYSVSIE</sequence>
<organism>
    <name type="scientific">Aspergillus niger</name>
    <dbReference type="NCBI Taxonomy" id="5061"/>
    <lineage>
        <taxon>Eukaryota</taxon>
        <taxon>Fungi</taxon>
        <taxon>Dikarya</taxon>
        <taxon>Ascomycota</taxon>
        <taxon>Pezizomycotina</taxon>
        <taxon>Eurotiomycetes</taxon>
        <taxon>Eurotiomycetidae</taxon>
        <taxon>Eurotiales</taxon>
        <taxon>Aspergillaceae</taxon>
        <taxon>Aspergillus</taxon>
        <taxon>Aspergillus subgen. Circumdati</taxon>
    </lineage>
</organism>
<dbReference type="EC" id="3.2.1.151"/>
<dbReference type="EMBL" id="DQ486529">
    <property type="protein sequence ID" value="ABF46829.1"/>
    <property type="molecule type" value="mRNA"/>
</dbReference>
<dbReference type="SMR" id="A1XP58"/>
<dbReference type="CAZy" id="GH12">
    <property type="family name" value="Glycoside Hydrolase Family 12"/>
</dbReference>
<dbReference type="GlyCosmos" id="A1XP58">
    <property type="glycosylation" value="1 site, No reported glycans"/>
</dbReference>
<dbReference type="PaxDb" id="5061-CADANGAP00000317"/>
<dbReference type="VEuPathDB" id="FungiDB:An01g03340"/>
<dbReference type="VEuPathDB" id="FungiDB:ASPNIDRAFT2_1142168"/>
<dbReference type="VEuPathDB" id="FungiDB:ATCC64974_20420"/>
<dbReference type="VEuPathDB" id="FungiDB:M747DRAFT_334034"/>
<dbReference type="eggNOG" id="ENOG502RW43">
    <property type="taxonomic scope" value="Eukaryota"/>
</dbReference>
<dbReference type="OrthoDB" id="95118at2759"/>
<dbReference type="BioCyc" id="MetaCyc:MONOMER-16908"/>
<dbReference type="BRENDA" id="3.2.1.151">
    <property type="organism ID" value="518"/>
</dbReference>
<dbReference type="GO" id="GO:0005576">
    <property type="term" value="C:extracellular region"/>
    <property type="evidence" value="ECO:0007669"/>
    <property type="project" value="UniProtKB-SubCell"/>
</dbReference>
<dbReference type="GO" id="GO:0008810">
    <property type="term" value="F:cellulase activity"/>
    <property type="evidence" value="ECO:0007669"/>
    <property type="project" value="InterPro"/>
</dbReference>
<dbReference type="GO" id="GO:0033946">
    <property type="term" value="F:xyloglucan-specific endo-beta-1,4-glucanase activity"/>
    <property type="evidence" value="ECO:0007669"/>
    <property type="project" value="UniProtKB-EC"/>
</dbReference>
<dbReference type="GO" id="GO:0071555">
    <property type="term" value="P:cell wall organization"/>
    <property type="evidence" value="ECO:0007669"/>
    <property type="project" value="UniProtKB-KW"/>
</dbReference>
<dbReference type="GO" id="GO:0000272">
    <property type="term" value="P:polysaccharide catabolic process"/>
    <property type="evidence" value="ECO:0007669"/>
    <property type="project" value="UniProtKB-KW"/>
</dbReference>
<dbReference type="Gene3D" id="2.60.120.180">
    <property type="match status" value="1"/>
</dbReference>
<dbReference type="InterPro" id="IPR013320">
    <property type="entry name" value="ConA-like_dom_sf"/>
</dbReference>
<dbReference type="InterPro" id="IPR013319">
    <property type="entry name" value="GH11/12"/>
</dbReference>
<dbReference type="InterPro" id="IPR002594">
    <property type="entry name" value="GH12"/>
</dbReference>
<dbReference type="PANTHER" id="PTHR34002">
    <property type="entry name" value="BLR1656 PROTEIN"/>
    <property type="match status" value="1"/>
</dbReference>
<dbReference type="PANTHER" id="PTHR34002:SF9">
    <property type="entry name" value="XYLOGLUCAN-SPECIFIC ENDO-BETA-1,4-GLUCANASE A"/>
    <property type="match status" value="1"/>
</dbReference>
<dbReference type="Pfam" id="PF01670">
    <property type="entry name" value="Glyco_hydro_12"/>
    <property type="match status" value="1"/>
</dbReference>
<dbReference type="SUPFAM" id="SSF49899">
    <property type="entry name" value="Concanavalin A-like lectins/glucanases"/>
    <property type="match status" value="1"/>
</dbReference>
<evidence type="ECO:0000255" key="1"/>
<evidence type="ECO:0000269" key="2">
    <source>
    </source>
</evidence>
<evidence type="ECO:0000305" key="3"/>
<evidence type="ECO:0000305" key="4">
    <source>
    </source>
</evidence>
<accession>A1XP58</accession>
<protein>
    <recommendedName>
        <fullName>Xyloglucan-specific endo-beta-1,4-glucanase A</fullName>
        <ecNumber>3.2.1.151</ecNumber>
    </recommendedName>
    <alternativeName>
        <fullName>Xyloglucanase A</fullName>
    </alternativeName>
    <alternativeName>
        <fullName>Xyloglucanendohydrolase A</fullName>
    </alternativeName>
</protein>